<reference key="1">
    <citation type="journal article" date="1994" name="FEMS Microbiol. Lett.">
        <title>The nusG gene of Streptomyces griseus: cloning of the gene and analysis of the A-factor binding properties of the gene product.</title>
        <authorList>
            <person name="Kuberski S."/>
            <person name="Kasberg T."/>
            <person name="Distler J."/>
        </authorList>
    </citation>
    <scope>NUCLEOTIDE SEQUENCE [GENOMIC DNA]</scope>
    <source>
        <strain>N2-3-11</strain>
    </source>
</reference>
<reference key="2">
    <citation type="journal article" date="1994" name="Biochim. Biophys. Acta">
        <title>Organization and nucleotide sequence of the secE-nusG region of Streptomyces griseus.</title>
        <authorList>
            <person name="Miyake K."/>
            <person name="Onaka H."/>
            <person name="Horinouchi S."/>
            <person name="Beppu T."/>
        </authorList>
    </citation>
    <scope>NUCLEOTIDE SEQUENCE [GENOMIC DNA] OF 1-64</scope>
    <source>
        <strain>IFO 13350 / CBS 651.72</strain>
    </source>
</reference>
<name>AAT_STRGR</name>
<feature type="chain" id="PRO_0000123852" description="Probable aspartate aminotransferase">
    <location>
        <begin position="1"/>
        <end position="213" status="greater than"/>
    </location>
</feature>
<feature type="binding site" evidence="1">
    <location>
        <position position="47"/>
    </location>
    <ligand>
        <name>L-aspartate</name>
        <dbReference type="ChEBI" id="CHEBI:29991"/>
    </ligand>
</feature>
<feature type="binding site" evidence="1">
    <location>
        <position position="133"/>
    </location>
    <ligand>
        <name>L-aspartate</name>
        <dbReference type="ChEBI" id="CHEBI:29991"/>
    </ligand>
</feature>
<feature type="binding site" evidence="1">
    <location>
        <position position="183"/>
    </location>
    <ligand>
        <name>L-aspartate</name>
        <dbReference type="ChEBI" id="CHEBI:29991"/>
    </ligand>
</feature>
<feature type="non-terminal residue">
    <location>
        <position position="213"/>
    </location>
</feature>
<gene>
    <name type="primary">aspC</name>
    <name type="synonym">aatA</name>
</gene>
<comment type="catalytic activity">
    <reaction>
        <text>L-aspartate + 2-oxoglutarate = oxaloacetate + L-glutamate</text>
        <dbReference type="Rhea" id="RHEA:21824"/>
        <dbReference type="ChEBI" id="CHEBI:16452"/>
        <dbReference type="ChEBI" id="CHEBI:16810"/>
        <dbReference type="ChEBI" id="CHEBI:29985"/>
        <dbReference type="ChEBI" id="CHEBI:29991"/>
        <dbReference type="EC" id="2.6.1.1"/>
    </reaction>
</comment>
<comment type="cofactor">
    <cofactor>
        <name>pyridoxal 5'-phosphate</name>
        <dbReference type="ChEBI" id="CHEBI:597326"/>
    </cofactor>
</comment>
<comment type="subunit">
    <text evidence="1">Homodimer.</text>
</comment>
<comment type="subcellular location">
    <subcellularLocation>
        <location evidence="1">Cytoplasm</location>
    </subcellularLocation>
</comment>
<comment type="similarity">
    <text evidence="2">Belongs to the class-I pyridoxal-phosphate-dependent aminotransferase family.</text>
</comment>
<protein>
    <recommendedName>
        <fullName>Probable aspartate aminotransferase</fullName>
        <shortName>AspAT</shortName>
        <ecNumber>2.6.1.1</ecNumber>
    </recommendedName>
    <alternativeName>
        <fullName>Transaminase A</fullName>
    </alternativeName>
</protein>
<sequence length="213" mass="22694">MSAATSPSERRVSARIGAISESATLAVDAKAKALKAAGRPVIGFGAGEPDFPTPDYIVDAAVEACRNPKYHRYTPQRAPELKAAIAEKTLRDSGYEVDAGQILVTNGGKQAIYEAFAAILDPGDEVIVPAPYWTTYPESIRLAGGVPVEVVADETTGYRVSVEQLEAARTEKTKVVLFVSPSNPTGAVYSEADAEAIGRWAVEHGLWVMTDEI</sequence>
<proteinExistence type="inferred from homology"/>
<dbReference type="EC" id="2.6.1.1"/>
<dbReference type="EMBL" id="X72787">
    <property type="protein sequence ID" value="CAA51294.1"/>
    <property type="molecule type" value="Genomic_DNA"/>
</dbReference>
<dbReference type="EMBL" id="D17464">
    <property type="status" value="NOT_ANNOTATED_CDS"/>
    <property type="molecule type" value="Genomic_DNA"/>
</dbReference>
<dbReference type="PIR" id="S41059">
    <property type="entry name" value="S41059"/>
</dbReference>
<dbReference type="SMR" id="P36692"/>
<dbReference type="STRING" id="1911.GCA_001715295_02340"/>
<dbReference type="GO" id="GO:0005737">
    <property type="term" value="C:cytoplasm"/>
    <property type="evidence" value="ECO:0007669"/>
    <property type="project" value="UniProtKB-SubCell"/>
</dbReference>
<dbReference type="GO" id="GO:0004069">
    <property type="term" value="F:L-aspartate:2-oxoglutarate aminotransferase activity"/>
    <property type="evidence" value="ECO:0007669"/>
    <property type="project" value="UniProtKB-EC"/>
</dbReference>
<dbReference type="GO" id="GO:0030170">
    <property type="term" value="F:pyridoxal phosphate binding"/>
    <property type="evidence" value="ECO:0007669"/>
    <property type="project" value="InterPro"/>
</dbReference>
<dbReference type="GO" id="GO:0006520">
    <property type="term" value="P:amino acid metabolic process"/>
    <property type="evidence" value="ECO:0007669"/>
    <property type="project" value="InterPro"/>
</dbReference>
<dbReference type="GO" id="GO:0009058">
    <property type="term" value="P:biosynthetic process"/>
    <property type="evidence" value="ECO:0007669"/>
    <property type="project" value="InterPro"/>
</dbReference>
<dbReference type="CDD" id="cd00609">
    <property type="entry name" value="AAT_like"/>
    <property type="match status" value="1"/>
</dbReference>
<dbReference type="Gene3D" id="3.90.1150.10">
    <property type="entry name" value="Aspartate Aminotransferase, domain 1"/>
    <property type="match status" value="1"/>
</dbReference>
<dbReference type="Gene3D" id="3.40.640.10">
    <property type="entry name" value="Type I PLP-dependent aspartate aminotransferase-like (Major domain)"/>
    <property type="match status" value="1"/>
</dbReference>
<dbReference type="InterPro" id="IPR004839">
    <property type="entry name" value="Aminotransferase_I/II_large"/>
</dbReference>
<dbReference type="InterPro" id="IPR050596">
    <property type="entry name" value="AspAT/PAT-like"/>
</dbReference>
<dbReference type="InterPro" id="IPR015424">
    <property type="entry name" value="PyrdxlP-dep_Trfase"/>
</dbReference>
<dbReference type="InterPro" id="IPR015421">
    <property type="entry name" value="PyrdxlP-dep_Trfase_major"/>
</dbReference>
<dbReference type="InterPro" id="IPR015422">
    <property type="entry name" value="PyrdxlP-dep_Trfase_small"/>
</dbReference>
<dbReference type="PANTHER" id="PTHR46383">
    <property type="entry name" value="ASPARTATE AMINOTRANSFERASE"/>
    <property type="match status" value="1"/>
</dbReference>
<dbReference type="PANTHER" id="PTHR46383:SF1">
    <property type="entry name" value="ASPARTATE AMINOTRANSFERASE"/>
    <property type="match status" value="1"/>
</dbReference>
<dbReference type="Pfam" id="PF00155">
    <property type="entry name" value="Aminotran_1_2"/>
    <property type="match status" value="1"/>
</dbReference>
<dbReference type="SUPFAM" id="SSF53383">
    <property type="entry name" value="PLP-dependent transferases"/>
    <property type="match status" value="1"/>
</dbReference>
<evidence type="ECO:0000250" key="1"/>
<evidence type="ECO:0000305" key="2"/>
<accession>P36692</accession>
<keyword id="KW-0032">Aminotransferase</keyword>
<keyword id="KW-0963">Cytoplasm</keyword>
<keyword id="KW-0663">Pyridoxal phosphate</keyword>
<keyword id="KW-0808">Transferase</keyword>
<organism>
    <name type="scientific">Streptomyces griseus</name>
    <dbReference type="NCBI Taxonomy" id="1911"/>
    <lineage>
        <taxon>Bacteria</taxon>
        <taxon>Bacillati</taxon>
        <taxon>Actinomycetota</taxon>
        <taxon>Actinomycetes</taxon>
        <taxon>Kitasatosporales</taxon>
        <taxon>Streptomycetaceae</taxon>
        <taxon>Streptomyces</taxon>
    </lineage>
</organism>